<keyword id="KW-0030">Aminoacyl-tRNA synthetase</keyword>
<keyword id="KW-0067">ATP-binding</keyword>
<keyword id="KW-0963">Cytoplasm</keyword>
<keyword id="KW-0436">Ligase</keyword>
<keyword id="KW-0547">Nucleotide-binding</keyword>
<keyword id="KW-0648">Protein biosynthesis</keyword>
<keyword id="KW-1185">Reference proteome</keyword>
<proteinExistence type="inferred from homology"/>
<dbReference type="EC" id="6.1.1.23" evidence="1"/>
<dbReference type="EMBL" id="AE000512">
    <property type="protein sequence ID" value="AAD36510.1"/>
    <property type="molecule type" value="Genomic_DNA"/>
</dbReference>
<dbReference type="PIR" id="F72252">
    <property type="entry name" value="F72252"/>
</dbReference>
<dbReference type="RefSeq" id="NP_229240.1">
    <property type="nucleotide sequence ID" value="NC_000853.1"/>
</dbReference>
<dbReference type="RefSeq" id="WP_004081712.1">
    <property type="nucleotide sequence ID" value="NZ_CP011107.1"/>
</dbReference>
<dbReference type="SMR" id="Q9X1F4"/>
<dbReference type="FunCoup" id="Q9X1F4">
    <property type="interactions" value="388"/>
</dbReference>
<dbReference type="STRING" id="243274.TM_1441"/>
<dbReference type="PaxDb" id="243274-THEMA_07110"/>
<dbReference type="EnsemblBacteria" id="AAD36510">
    <property type="protein sequence ID" value="AAD36510"/>
    <property type="gene ID" value="TM_1441"/>
</dbReference>
<dbReference type="KEGG" id="tma:TM1441"/>
<dbReference type="KEGG" id="tmi:THEMA_07110"/>
<dbReference type="KEGG" id="tmm:Tmari_1447"/>
<dbReference type="KEGG" id="tmw:THMA_1471"/>
<dbReference type="eggNOG" id="COG0173">
    <property type="taxonomic scope" value="Bacteria"/>
</dbReference>
<dbReference type="InParanoid" id="Q9X1F4"/>
<dbReference type="OrthoDB" id="9802326at2"/>
<dbReference type="Proteomes" id="UP000008183">
    <property type="component" value="Chromosome"/>
</dbReference>
<dbReference type="GO" id="GO:0005737">
    <property type="term" value="C:cytoplasm"/>
    <property type="evidence" value="ECO:0007669"/>
    <property type="project" value="UniProtKB-SubCell"/>
</dbReference>
<dbReference type="GO" id="GO:0004815">
    <property type="term" value="F:aspartate-tRNA ligase activity"/>
    <property type="evidence" value="ECO:0000318"/>
    <property type="project" value="GO_Central"/>
</dbReference>
<dbReference type="GO" id="GO:0050560">
    <property type="term" value="F:aspartate-tRNA(Asn) ligase activity"/>
    <property type="evidence" value="ECO:0007669"/>
    <property type="project" value="UniProtKB-EC"/>
</dbReference>
<dbReference type="GO" id="GO:0005524">
    <property type="term" value="F:ATP binding"/>
    <property type="evidence" value="ECO:0007669"/>
    <property type="project" value="UniProtKB-UniRule"/>
</dbReference>
<dbReference type="GO" id="GO:0003676">
    <property type="term" value="F:nucleic acid binding"/>
    <property type="evidence" value="ECO:0007669"/>
    <property type="project" value="InterPro"/>
</dbReference>
<dbReference type="GO" id="GO:0006422">
    <property type="term" value="P:aspartyl-tRNA aminoacylation"/>
    <property type="evidence" value="ECO:0000318"/>
    <property type="project" value="GO_Central"/>
</dbReference>
<dbReference type="CDD" id="cd00777">
    <property type="entry name" value="AspRS_core"/>
    <property type="match status" value="1"/>
</dbReference>
<dbReference type="CDD" id="cd04317">
    <property type="entry name" value="EcAspRS_like_N"/>
    <property type="match status" value="1"/>
</dbReference>
<dbReference type="Gene3D" id="3.30.930.10">
    <property type="entry name" value="Bira Bifunctional Protein, Domain 2"/>
    <property type="match status" value="1"/>
</dbReference>
<dbReference type="Gene3D" id="3.30.1360.30">
    <property type="entry name" value="GAD-like domain"/>
    <property type="match status" value="1"/>
</dbReference>
<dbReference type="Gene3D" id="2.40.50.140">
    <property type="entry name" value="Nucleic acid-binding proteins"/>
    <property type="match status" value="1"/>
</dbReference>
<dbReference type="HAMAP" id="MF_00044">
    <property type="entry name" value="Asp_tRNA_synth_type1"/>
    <property type="match status" value="1"/>
</dbReference>
<dbReference type="InterPro" id="IPR004364">
    <property type="entry name" value="Aa-tRNA-synt_II"/>
</dbReference>
<dbReference type="InterPro" id="IPR006195">
    <property type="entry name" value="aa-tRNA-synth_II"/>
</dbReference>
<dbReference type="InterPro" id="IPR045864">
    <property type="entry name" value="aa-tRNA-synth_II/BPL/LPL"/>
</dbReference>
<dbReference type="InterPro" id="IPR004524">
    <property type="entry name" value="Asp-tRNA-ligase_1"/>
</dbReference>
<dbReference type="InterPro" id="IPR047089">
    <property type="entry name" value="Asp-tRNA-ligase_1_N"/>
</dbReference>
<dbReference type="InterPro" id="IPR002312">
    <property type="entry name" value="Asp/Asn-tRNA-synth_IIb"/>
</dbReference>
<dbReference type="InterPro" id="IPR047090">
    <property type="entry name" value="AspRS_core"/>
</dbReference>
<dbReference type="InterPro" id="IPR004115">
    <property type="entry name" value="GAD-like_sf"/>
</dbReference>
<dbReference type="InterPro" id="IPR029351">
    <property type="entry name" value="GAD_dom"/>
</dbReference>
<dbReference type="InterPro" id="IPR012340">
    <property type="entry name" value="NA-bd_OB-fold"/>
</dbReference>
<dbReference type="InterPro" id="IPR004365">
    <property type="entry name" value="NA-bd_OB_tRNA"/>
</dbReference>
<dbReference type="NCBIfam" id="TIGR00459">
    <property type="entry name" value="aspS_bact"/>
    <property type="match status" value="1"/>
</dbReference>
<dbReference type="NCBIfam" id="NF001750">
    <property type="entry name" value="PRK00476.1"/>
    <property type="match status" value="1"/>
</dbReference>
<dbReference type="PANTHER" id="PTHR22594:SF5">
    <property type="entry name" value="ASPARTATE--TRNA LIGASE, MITOCHONDRIAL"/>
    <property type="match status" value="1"/>
</dbReference>
<dbReference type="PANTHER" id="PTHR22594">
    <property type="entry name" value="ASPARTYL/LYSYL-TRNA SYNTHETASE"/>
    <property type="match status" value="1"/>
</dbReference>
<dbReference type="Pfam" id="PF02938">
    <property type="entry name" value="GAD"/>
    <property type="match status" value="1"/>
</dbReference>
<dbReference type="Pfam" id="PF00152">
    <property type="entry name" value="tRNA-synt_2"/>
    <property type="match status" value="1"/>
</dbReference>
<dbReference type="Pfam" id="PF01336">
    <property type="entry name" value="tRNA_anti-codon"/>
    <property type="match status" value="1"/>
</dbReference>
<dbReference type="PRINTS" id="PR01042">
    <property type="entry name" value="TRNASYNTHASP"/>
</dbReference>
<dbReference type="SUPFAM" id="SSF55681">
    <property type="entry name" value="Class II aaRS and biotin synthetases"/>
    <property type="match status" value="1"/>
</dbReference>
<dbReference type="SUPFAM" id="SSF55261">
    <property type="entry name" value="GAD domain-like"/>
    <property type="match status" value="1"/>
</dbReference>
<dbReference type="SUPFAM" id="SSF50249">
    <property type="entry name" value="Nucleic acid-binding proteins"/>
    <property type="match status" value="1"/>
</dbReference>
<dbReference type="PROSITE" id="PS50862">
    <property type="entry name" value="AA_TRNA_LIGASE_II"/>
    <property type="match status" value="1"/>
</dbReference>
<reference key="1">
    <citation type="journal article" date="1999" name="Nature">
        <title>Evidence for lateral gene transfer between Archaea and Bacteria from genome sequence of Thermotoga maritima.</title>
        <authorList>
            <person name="Nelson K.E."/>
            <person name="Clayton R.A."/>
            <person name="Gill S.R."/>
            <person name="Gwinn M.L."/>
            <person name="Dodson R.J."/>
            <person name="Haft D.H."/>
            <person name="Hickey E.K."/>
            <person name="Peterson J.D."/>
            <person name="Nelson W.C."/>
            <person name="Ketchum K.A."/>
            <person name="McDonald L.A."/>
            <person name="Utterback T.R."/>
            <person name="Malek J.A."/>
            <person name="Linher K.D."/>
            <person name="Garrett M.M."/>
            <person name="Stewart A.M."/>
            <person name="Cotton M.D."/>
            <person name="Pratt M.S."/>
            <person name="Phillips C.A."/>
            <person name="Richardson D.L."/>
            <person name="Heidelberg J.F."/>
            <person name="Sutton G.G."/>
            <person name="Fleischmann R.D."/>
            <person name="Eisen J.A."/>
            <person name="White O."/>
            <person name="Salzberg S.L."/>
            <person name="Smith H.O."/>
            <person name="Venter J.C."/>
            <person name="Fraser C.M."/>
        </authorList>
    </citation>
    <scope>NUCLEOTIDE SEQUENCE [LARGE SCALE GENOMIC DNA]</scope>
    <source>
        <strain>ATCC 43589 / DSM 3109 / JCM 10099 / NBRC 100826 / MSB8</strain>
    </source>
</reference>
<feature type="chain" id="PRO_0000110968" description="Aspartate--tRNA(Asp/Asn) ligase">
    <location>
        <begin position="1"/>
        <end position="579"/>
    </location>
</feature>
<feature type="region of interest" description="Aspartate" evidence="1">
    <location>
        <begin position="195"/>
        <end position="198"/>
    </location>
</feature>
<feature type="binding site" evidence="1">
    <location>
        <position position="171"/>
    </location>
    <ligand>
        <name>L-aspartate</name>
        <dbReference type="ChEBI" id="CHEBI:29991"/>
    </ligand>
</feature>
<feature type="binding site" evidence="1">
    <location>
        <begin position="217"/>
        <end position="219"/>
    </location>
    <ligand>
        <name>ATP</name>
        <dbReference type="ChEBI" id="CHEBI:30616"/>
    </ligand>
</feature>
<feature type="binding site" evidence="1">
    <location>
        <position position="217"/>
    </location>
    <ligand>
        <name>L-aspartate</name>
        <dbReference type="ChEBI" id="CHEBI:29991"/>
    </ligand>
</feature>
<feature type="binding site" evidence="1">
    <location>
        <position position="226"/>
    </location>
    <ligand>
        <name>ATP</name>
        <dbReference type="ChEBI" id="CHEBI:30616"/>
    </ligand>
</feature>
<feature type="binding site" evidence="1">
    <location>
        <position position="444"/>
    </location>
    <ligand>
        <name>L-aspartate</name>
        <dbReference type="ChEBI" id="CHEBI:29991"/>
    </ligand>
</feature>
<feature type="binding site" evidence="1">
    <location>
        <position position="475"/>
    </location>
    <ligand>
        <name>ATP</name>
        <dbReference type="ChEBI" id="CHEBI:30616"/>
    </ligand>
</feature>
<feature type="binding site" evidence="1">
    <location>
        <position position="482"/>
    </location>
    <ligand>
        <name>L-aspartate</name>
        <dbReference type="ChEBI" id="CHEBI:29991"/>
    </ligand>
</feature>
<feature type="binding site" evidence="1">
    <location>
        <begin position="527"/>
        <end position="530"/>
    </location>
    <ligand>
        <name>ATP</name>
        <dbReference type="ChEBI" id="CHEBI:30616"/>
    </ligand>
</feature>
<feature type="site" description="Important for tRNA non-discrimination" evidence="1">
    <location>
        <position position="81"/>
    </location>
</feature>
<evidence type="ECO:0000255" key="1">
    <source>
        <dbReference type="HAMAP-Rule" id="MF_00044"/>
    </source>
</evidence>
<accession>Q9X1F4</accession>
<sequence length="579" mass="66495">MLRTHTCGELRATDEGKKVKLCGWVDRIRDLGGVRFIDLRDRYGETQIVCDVNSEAYSVVDELTRESVVLVEGTVRKRPEGTENPNIETGEIEVVAERIEILSLADPLPFYPGETPKEEMRLKYRYIDLRSERMKRNIILRYRISKIIRDYFDELGFLEIETPFLTRSTPEGARDFLVPSRLRPGKFYALPQSPQLFKQILMISGFDRYFQIVRCFRDEDLRADRQPEFTQVDVEMSFVDVEDVLNVSEGMVSRVFKESSGIDLKVPFDRIPYDDAMEKYGTDKPDRRYGMELRDFGYAFETTEFKVIRNVLNEGGSVKGFIVPGFASEMSRKKGEELMARMKELGLGGLIWFKLDGGITSPHLKHLEKEFRKIAETENMNEGDVCLIAAHTDRNLLNEALGTLRLEIGKEHFSHLAKGFDVLWVVDFPYFEWSEEEERFVARHHPFTMPVLETLGDDYTKVRAKAYDLVINGYEVGGGSIRIHRRDIQEKIFELLGLSEEEAQKKFGFFLEAFRYGVPPHGGIAFGLDRLVSIIAGESSIREVIAFPKTGNGVCLLTGAPAEVDERQLRELRIRIEEG</sequence>
<comment type="function">
    <text evidence="1">Aspartyl-tRNA synthetase with relaxed tRNA specificity since it is able to aspartylate not only its cognate tRNA(Asp) but also tRNA(Asn). Reaction proceeds in two steps: L-aspartate is first activated by ATP to form Asp-AMP and then transferred to the acceptor end of tRNA(Asp/Asn).</text>
</comment>
<comment type="catalytic activity">
    <reaction evidence="1">
        <text>tRNA(Asx) + L-aspartate + ATP = L-aspartyl-tRNA(Asx) + AMP + diphosphate</text>
        <dbReference type="Rhea" id="RHEA:18349"/>
        <dbReference type="Rhea" id="RHEA-COMP:9710"/>
        <dbReference type="Rhea" id="RHEA-COMP:9711"/>
        <dbReference type="ChEBI" id="CHEBI:29991"/>
        <dbReference type="ChEBI" id="CHEBI:30616"/>
        <dbReference type="ChEBI" id="CHEBI:33019"/>
        <dbReference type="ChEBI" id="CHEBI:78442"/>
        <dbReference type="ChEBI" id="CHEBI:78516"/>
        <dbReference type="ChEBI" id="CHEBI:456215"/>
        <dbReference type="EC" id="6.1.1.23"/>
    </reaction>
</comment>
<comment type="subunit">
    <text evidence="1">Homodimer.</text>
</comment>
<comment type="subcellular location">
    <subcellularLocation>
        <location evidence="1">Cytoplasm</location>
    </subcellularLocation>
</comment>
<comment type="similarity">
    <text evidence="1">Belongs to the class-II aminoacyl-tRNA synthetase family. Type 1 subfamily.</text>
</comment>
<organism>
    <name type="scientific">Thermotoga maritima (strain ATCC 43589 / DSM 3109 / JCM 10099 / NBRC 100826 / MSB8)</name>
    <dbReference type="NCBI Taxonomy" id="243274"/>
    <lineage>
        <taxon>Bacteria</taxon>
        <taxon>Thermotogati</taxon>
        <taxon>Thermotogota</taxon>
        <taxon>Thermotogae</taxon>
        <taxon>Thermotogales</taxon>
        <taxon>Thermotogaceae</taxon>
        <taxon>Thermotoga</taxon>
    </lineage>
</organism>
<name>SYDND_THEMA</name>
<protein>
    <recommendedName>
        <fullName evidence="1">Aspartate--tRNA(Asp/Asn) ligase</fullName>
        <ecNumber evidence="1">6.1.1.23</ecNumber>
    </recommendedName>
    <alternativeName>
        <fullName evidence="1">Aspartyl-tRNA synthetase</fullName>
        <shortName evidence="1">AspRS</shortName>
    </alternativeName>
    <alternativeName>
        <fullName evidence="1">Non-discriminating aspartyl-tRNA synthetase</fullName>
        <shortName evidence="1">ND-AspRS</shortName>
    </alternativeName>
</protein>
<gene>
    <name evidence="1" type="primary">aspS</name>
    <name type="ordered locus">TM_1441</name>
</gene>